<keyword id="KW-0963">Cytoplasm</keyword>
<keyword id="KW-0378">Hydrolase</keyword>
<keyword id="KW-0539">Nucleus</keyword>
<keyword id="KW-0597">Phosphoprotein</keyword>
<keyword id="KW-0645">Protease</keyword>
<keyword id="KW-1185">Reference proteome</keyword>
<keyword id="KW-0694">RNA-binding</keyword>
<keyword id="KW-0788">Thiol protease</keyword>
<keyword id="KW-0808">Transferase</keyword>
<keyword id="KW-0832">Ubl conjugation</keyword>
<keyword id="KW-0833">Ubl conjugation pathway</keyword>
<gene>
    <name type="primary">Usp36</name>
    <name type="synonym">Kiaa1453</name>
</gene>
<dbReference type="EC" id="2.3.2.-" evidence="1"/>
<dbReference type="EC" id="3.4.19.12" evidence="1"/>
<dbReference type="EMBL" id="AL591404">
    <property type="status" value="NOT_ANNOTATED_CDS"/>
    <property type="molecule type" value="Genomic_DNA"/>
</dbReference>
<dbReference type="EMBL" id="AK129363">
    <property type="protein sequence ID" value="BAC98173.1"/>
    <property type="status" value="ALT_INIT"/>
    <property type="molecule type" value="mRNA"/>
</dbReference>
<dbReference type="CCDS" id="CCDS48998.1"/>
<dbReference type="RefSeq" id="NP_001028700.1">
    <property type="nucleotide sequence ID" value="NM_001033528.1"/>
</dbReference>
<dbReference type="RefSeq" id="XP_006534365.1">
    <property type="nucleotide sequence ID" value="XM_006534302.5"/>
</dbReference>
<dbReference type="RefSeq" id="XP_006534366.1">
    <property type="nucleotide sequence ID" value="XM_006534303.2"/>
</dbReference>
<dbReference type="RefSeq" id="XP_006534367.1">
    <property type="nucleotide sequence ID" value="XM_006534304.5"/>
</dbReference>
<dbReference type="RefSeq" id="XP_036012905.1">
    <property type="nucleotide sequence ID" value="XM_036157012.1"/>
</dbReference>
<dbReference type="SMR" id="B1AQJ2"/>
<dbReference type="BioGRID" id="215324">
    <property type="interactions" value="1"/>
</dbReference>
<dbReference type="FunCoup" id="B1AQJ2">
    <property type="interactions" value="3819"/>
</dbReference>
<dbReference type="STRING" id="10090.ENSMUSP00000101903"/>
<dbReference type="GlyGen" id="B1AQJ2">
    <property type="glycosylation" value="2 sites, 1 O-linked glycan (1 site)"/>
</dbReference>
<dbReference type="iPTMnet" id="B1AQJ2"/>
<dbReference type="PhosphoSitePlus" id="B1AQJ2"/>
<dbReference type="PaxDb" id="10090-ENSMUSP00000101903"/>
<dbReference type="PeptideAtlas" id="B1AQJ2"/>
<dbReference type="ProteomicsDB" id="298360"/>
<dbReference type="Pumba" id="B1AQJ2"/>
<dbReference type="Antibodypedia" id="1709">
    <property type="antibodies" value="255 antibodies from 29 providers"/>
</dbReference>
<dbReference type="DNASU" id="72344"/>
<dbReference type="Ensembl" id="ENSMUST00000092382.10">
    <property type="protein sequence ID" value="ENSMUSP00000090036.4"/>
    <property type="gene ID" value="ENSMUSG00000033909.18"/>
</dbReference>
<dbReference type="Ensembl" id="ENSMUST00000106296.9">
    <property type="protein sequence ID" value="ENSMUSP00000101903.3"/>
    <property type="gene ID" value="ENSMUSG00000033909.18"/>
</dbReference>
<dbReference type="GeneID" id="72344"/>
<dbReference type="KEGG" id="mmu:72344"/>
<dbReference type="UCSC" id="uc007mot.2">
    <property type="organism name" value="mouse"/>
</dbReference>
<dbReference type="AGR" id="MGI:1919594"/>
<dbReference type="CTD" id="57602"/>
<dbReference type="MGI" id="MGI:1919594">
    <property type="gene designation" value="Usp36"/>
</dbReference>
<dbReference type="VEuPathDB" id="HostDB:ENSMUSG00000033909"/>
<dbReference type="eggNOG" id="KOG1865">
    <property type="taxonomic scope" value="Eukaryota"/>
</dbReference>
<dbReference type="GeneTree" id="ENSGT00940000157948"/>
<dbReference type="HOGENOM" id="CLU_008279_10_1_1"/>
<dbReference type="InParanoid" id="B1AQJ2"/>
<dbReference type="OMA" id="STWPVSK"/>
<dbReference type="OrthoDB" id="420187at2759"/>
<dbReference type="PhylomeDB" id="B1AQJ2"/>
<dbReference type="TreeFam" id="TF315281"/>
<dbReference type="BioGRID-ORCS" id="72344">
    <property type="hits" value="26 hits in 81 CRISPR screens"/>
</dbReference>
<dbReference type="ChiTaRS" id="Usp36">
    <property type="organism name" value="mouse"/>
</dbReference>
<dbReference type="PRO" id="PR:B1AQJ2"/>
<dbReference type="Proteomes" id="UP000000589">
    <property type="component" value="Chromosome 11"/>
</dbReference>
<dbReference type="RNAct" id="B1AQJ2">
    <property type="molecule type" value="protein"/>
</dbReference>
<dbReference type="Bgee" id="ENSMUSG00000033909">
    <property type="expression patterns" value="Expressed in rostral migratory stream and 236 other cell types or tissues"/>
</dbReference>
<dbReference type="ExpressionAtlas" id="B1AQJ2">
    <property type="expression patterns" value="baseline and differential"/>
</dbReference>
<dbReference type="GO" id="GO:0005737">
    <property type="term" value="C:cytoplasm"/>
    <property type="evidence" value="ECO:0000250"/>
    <property type="project" value="UniProtKB"/>
</dbReference>
<dbReference type="GO" id="GO:0016607">
    <property type="term" value="C:nuclear speck"/>
    <property type="evidence" value="ECO:0007669"/>
    <property type="project" value="Ensembl"/>
</dbReference>
<dbReference type="GO" id="GO:0005730">
    <property type="term" value="C:nucleolus"/>
    <property type="evidence" value="ECO:0000250"/>
    <property type="project" value="UniProtKB"/>
</dbReference>
<dbReference type="GO" id="GO:0004843">
    <property type="term" value="F:cysteine-type deubiquitinase activity"/>
    <property type="evidence" value="ECO:0007669"/>
    <property type="project" value="UniProtKB-EC"/>
</dbReference>
<dbReference type="GO" id="GO:0140936">
    <property type="term" value="F:histone H2B deubiquitinase activity"/>
    <property type="evidence" value="ECO:0007669"/>
    <property type="project" value="Ensembl"/>
</dbReference>
<dbReference type="GO" id="GO:1990380">
    <property type="term" value="F:K48-linked deubiquitinase activity"/>
    <property type="evidence" value="ECO:0007669"/>
    <property type="project" value="Ensembl"/>
</dbReference>
<dbReference type="GO" id="GO:0003723">
    <property type="term" value="F:RNA binding"/>
    <property type="evidence" value="ECO:0007669"/>
    <property type="project" value="UniProtKB-KW"/>
</dbReference>
<dbReference type="GO" id="GO:0016740">
    <property type="term" value="F:transferase activity"/>
    <property type="evidence" value="ECO:0007669"/>
    <property type="project" value="UniProtKB-KW"/>
</dbReference>
<dbReference type="GO" id="GO:0006325">
    <property type="term" value="P:chromatin organization"/>
    <property type="evidence" value="ECO:0000250"/>
    <property type="project" value="UniProtKB"/>
</dbReference>
<dbReference type="GO" id="GO:0016242">
    <property type="term" value="P:negative regulation of macroautophagy"/>
    <property type="evidence" value="ECO:0000250"/>
    <property type="project" value="UniProtKB"/>
</dbReference>
<dbReference type="GO" id="GO:0007000">
    <property type="term" value="P:nucleolus organization"/>
    <property type="evidence" value="ECO:0000315"/>
    <property type="project" value="UniProtKB"/>
</dbReference>
<dbReference type="GO" id="GO:0016579">
    <property type="term" value="P:protein deubiquitination"/>
    <property type="evidence" value="ECO:0000315"/>
    <property type="project" value="UniProtKB"/>
</dbReference>
<dbReference type="GO" id="GO:0050821">
    <property type="term" value="P:protein stabilization"/>
    <property type="evidence" value="ECO:0000315"/>
    <property type="project" value="UniProtKB"/>
</dbReference>
<dbReference type="GO" id="GO:0006508">
    <property type="term" value="P:proteolysis"/>
    <property type="evidence" value="ECO:0007669"/>
    <property type="project" value="UniProtKB-KW"/>
</dbReference>
<dbReference type="GO" id="GO:0031647">
    <property type="term" value="P:regulation of protein stability"/>
    <property type="evidence" value="ECO:0000250"/>
    <property type="project" value="UniProtKB"/>
</dbReference>
<dbReference type="GO" id="GO:2000232">
    <property type="term" value="P:regulation of rRNA processing"/>
    <property type="evidence" value="ECO:0000315"/>
    <property type="project" value="UniProtKB"/>
</dbReference>
<dbReference type="CDD" id="cd02661">
    <property type="entry name" value="Peptidase_C19E"/>
    <property type="match status" value="1"/>
</dbReference>
<dbReference type="FunFam" id="3.90.70.10:FF:000016">
    <property type="entry name" value="Ubiquitin carboxyl-terminal hydrolase 36"/>
    <property type="match status" value="1"/>
</dbReference>
<dbReference type="Gene3D" id="3.90.70.10">
    <property type="entry name" value="Cysteine proteinases"/>
    <property type="match status" value="1"/>
</dbReference>
<dbReference type="InterPro" id="IPR038765">
    <property type="entry name" value="Papain-like_cys_pep_sf"/>
</dbReference>
<dbReference type="InterPro" id="IPR050164">
    <property type="entry name" value="Peptidase_C19"/>
</dbReference>
<dbReference type="InterPro" id="IPR001394">
    <property type="entry name" value="Peptidase_C19_UCH"/>
</dbReference>
<dbReference type="InterPro" id="IPR018200">
    <property type="entry name" value="USP_CS"/>
</dbReference>
<dbReference type="InterPro" id="IPR028889">
    <property type="entry name" value="USP_dom"/>
</dbReference>
<dbReference type="PANTHER" id="PTHR24006">
    <property type="entry name" value="UBIQUITIN CARBOXYL-TERMINAL HYDROLASE"/>
    <property type="match status" value="1"/>
</dbReference>
<dbReference type="PANTHER" id="PTHR24006:SF653">
    <property type="entry name" value="UBIQUITIN CARBOXYL-TERMINAL HYDROLASE 36"/>
    <property type="match status" value="1"/>
</dbReference>
<dbReference type="Pfam" id="PF00443">
    <property type="entry name" value="UCH"/>
    <property type="match status" value="1"/>
</dbReference>
<dbReference type="SUPFAM" id="SSF54001">
    <property type="entry name" value="Cysteine proteinases"/>
    <property type="match status" value="1"/>
</dbReference>
<dbReference type="PROSITE" id="PS00972">
    <property type="entry name" value="USP_1"/>
    <property type="match status" value="1"/>
</dbReference>
<dbReference type="PROSITE" id="PS00973">
    <property type="entry name" value="USP_2"/>
    <property type="match status" value="1"/>
</dbReference>
<dbReference type="PROSITE" id="PS50235">
    <property type="entry name" value="USP_3"/>
    <property type="match status" value="1"/>
</dbReference>
<proteinExistence type="evidence at protein level"/>
<reference key="1">
    <citation type="journal article" date="2009" name="PLoS Biol.">
        <title>Lineage-specific biology revealed by a finished genome assembly of the mouse.</title>
        <authorList>
            <person name="Church D.M."/>
            <person name="Goodstadt L."/>
            <person name="Hillier L.W."/>
            <person name="Zody M.C."/>
            <person name="Goldstein S."/>
            <person name="She X."/>
            <person name="Bult C.J."/>
            <person name="Agarwala R."/>
            <person name="Cherry J.L."/>
            <person name="DiCuccio M."/>
            <person name="Hlavina W."/>
            <person name="Kapustin Y."/>
            <person name="Meric P."/>
            <person name="Maglott D."/>
            <person name="Birtle Z."/>
            <person name="Marques A.C."/>
            <person name="Graves T."/>
            <person name="Zhou S."/>
            <person name="Teague B."/>
            <person name="Potamousis K."/>
            <person name="Churas C."/>
            <person name="Place M."/>
            <person name="Herschleb J."/>
            <person name="Runnheim R."/>
            <person name="Forrest D."/>
            <person name="Amos-Landgraf J."/>
            <person name="Schwartz D.C."/>
            <person name="Cheng Z."/>
            <person name="Lindblad-Toh K."/>
            <person name="Eichler E.E."/>
            <person name="Ponting C.P."/>
        </authorList>
    </citation>
    <scope>NUCLEOTIDE SEQUENCE [LARGE SCALE GENOMIC DNA]</scope>
    <source>
        <strain>C57BL/6J</strain>
    </source>
</reference>
<reference key="2">
    <citation type="journal article" date="2003" name="DNA Res.">
        <title>Prediction of the coding sequences of mouse homologues of KIAA gene: III. The complete nucleotide sequences of 500 mouse KIAA-homologous cDNAs identified by screening of terminal sequences of cDNA clones randomly sampled from size-fractionated libraries.</title>
        <authorList>
            <person name="Okazaki N."/>
            <person name="Kikuno R."/>
            <person name="Ohara R."/>
            <person name="Inamoto S."/>
            <person name="Koseki H."/>
            <person name="Hiraoka S."/>
            <person name="Saga Y."/>
            <person name="Nagase T."/>
            <person name="Ohara O."/>
            <person name="Koga H."/>
        </authorList>
    </citation>
    <scope>NUCLEOTIDE SEQUENCE [LARGE SCALE MRNA] OF 1-937</scope>
    <source>
        <tissue>Embryonic tail</tissue>
    </source>
</reference>
<reference key="3">
    <citation type="journal article" date="2010" name="Cell">
        <title>A tissue-specific atlas of mouse protein phosphorylation and expression.</title>
        <authorList>
            <person name="Huttlin E.L."/>
            <person name="Jedrychowski M.P."/>
            <person name="Elias J.E."/>
            <person name="Goswami T."/>
            <person name="Rad R."/>
            <person name="Beausoleil S.A."/>
            <person name="Villen J."/>
            <person name="Haas W."/>
            <person name="Sowa M.E."/>
            <person name="Gygi S.P."/>
        </authorList>
    </citation>
    <scope>IDENTIFICATION BY MASS SPECTROMETRY [LARGE SCALE ANALYSIS]</scope>
    <source>
        <tissue>Pancreas</tissue>
    </source>
</reference>
<reference key="4">
    <citation type="journal article" date="2018" name="J. Biol. Chem.">
        <title>Loss of the deubiquitinase USP36 destabilizes the RNA helicase DHX33 and causes preimplantation lethality in mice.</title>
        <authorList>
            <person name="Fraile J.M."/>
            <person name="Campos-Iglesias D."/>
            <person name="Rodriguez F."/>
            <person name="Astudillo A."/>
            <person name="Vilarrasa-Blasi R."/>
            <person name="Verdaguer-Dot N."/>
            <person name="Prado M.A."/>
            <person name="Paulo J.A."/>
            <person name="Gygi S.P."/>
            <person name="Martin-Subero J.I."/>
            <person name="Freije J.M.P."/>
            <person name="Lopez-Otin C."/>
        </authorList>
    </citation>
    <scope>FUNCTION</scope>
    <scope>DISRUPTION PHENOTYPE</scope>
</reference>
<accession>B1AQJ2</accession>
<accession>Q6ZPQ7</accession>
<sequence>MPIVDKLKEALKPGRKDSAEDGDLGRLLAASAKKVLLQRIEFEPASKSFSYQLESLKSKYVLLSARAEGASRHRSGDELQARKPGTERVSGSGGDGVPAPQKVLFPVERLSLRWERVFRVGAGLHNLGNTCFLNSTIQCLTYTPPLANYLLSKEHARSCHQGGFCMLCLMQNHMVQAFANSGNAIKPVSFIRDLKKIARHFRFGNQEDAHEFLRYTIDAMQKACLNGYAKLDRQTQATTLVHQIFGGYLRSRVKCSVCKSVSDTYDPYLDIALEIRQAANIVRALELFVKSDVLSGENAYMCAKCKKKVPASKRFTIHRTSNVLTLSLKRFANFSGGKITKDVGYPEFLNIRPYMSQSSGDPVMYGLYAVLVHSGYSCHAGHYYCYVKASNGQWYQMNDSLVHSSNVKVVLNQQAYVLFYLRIPGSKKSPEGPVSRVGATLPSRPKVVPEHSKKSPGNGVVPSPLMAKRQDSVMMRKLPAPEEVGVPVSRNGSLPGLKLQNGCAPAKTPAGSPSPRLTPTPTHMPTILDEPGKKVKKSAPLQSLTTSPTTSQGSPGTGESRSQRPGSWASRDTIFSTSPKLLARAITNGHRLKGEGSGVDLEKGDSSSSSPEHSASSDPAKAPQTAESRAAHACDSQGTNCPTAGHPKALLNGVDAKMVKLKSPALSSTTTEPTSLMSPPPAKKLALSAKKASTLRRATGNDIGSPSPSAFCDLTSPMKATHPVVASTGPVSKTRTAAPAPRPSTHPHSASLSSSSAKPLGTSEPQSCRPSAWTPLPQVNGHFTSHLHQLPEASEALHSPSKKRKKTPNGDPQRLGIDTLLPQCLRGAPAAARRKRKKRCSEGEGATAPKQEGQFQDQSWSSGSQKEEGTQPQVNGHQVSHILDSYHVSSRKRRKRKRSEGLSQEATPSQDLIQHSCSPVDHSEPEARTELQKKKKKKRRKRKPEPQQDEESKHPGDQRSPRPSVTPVPALSVNGHLPSDCLGLGQAPLVTWNRDQEPDVVQALLQDSSDKAYGKKVLTWDGEPSAISQDAIKDSRLARTQTVVDDWDEEFDRGKEKKIKKFKREKKRNFNAFQKLQSRRNFWSVTHPAKVASLSYRR</sequence>
<organism>
    <name type="scientific">Mus musculus</name>
    <name type="common">Mouse</name>
    <dbReference type="NCBI Taxonomy" id="10090"/>
    <lineage>
        <taxon>Eukaryota</taxon>
        <taxon>Metazoa</taxon>
        <taxon>Chordata</taxon>
        <taxon>Craniata</taxon>
        <taxon>Vertebrata</taxon>
        <taxon>Euteleostomi</taxon>
        <taxon>Mammalia</taxon>
        <taxon>Eutheria</taxon>
        <taxon>Euarchontoglires</taxon>
        <taxon>Glires</taxon>
        <taxon>Rodentia</taxon>
        <taxon>Myomorpha</taxon>
        <taxon>Muroidea</taxon>
        <taxon>Muridae</taxon>
        <taxon>Murinae</taxon>
        <taxon>Mus</taxon>
        <taxon>Mus</taxon>
    </lineage>
</organism>
<name>UBP36_MOUSE</name>
<protein>
    <recommendedName>
        <fullName>Ubiquitin carboxyl-terminal hydrolase 36</fullName>
        <ecNumber evidence="1">2.3.2.-</ecNumber>
        <ecNumber evidence="1">3.4.19.12</ecNumber>
    </recommendedName>
    <alternativeName>
        <fullName>Deubiquitinating enzyme 36</fullName>
    </alternativeName>
    <alternativeName>
        <fullName>Ubiquitin thioesterase 36</fullName>
    </alternativeName>
    <alternativeName>
        <fullName>Ubiquitin-specific-processing protease 36</fullName>
    </alternativeName>
</protein>
<comment type="function">
    <text evidence="1 5">Deubiquitinase essential for the regulation of nucleolar structure and function. Required for cell and organism viability (PubMed:29273634). Plays an important role in ribosomal RNA processing and protein synthesis, which is mediated, at least in part, through deubiquitination of DHX33, NPM1 and FBL, regulating their protein stability (PubMed:29273634). Functions as a transcriptional repressor by deubiquiting histone H2B at the promoters of genes critical for cellular differentiation, such as CDKN1A, thereby preventing histone H3 'Lys-4' trimethylation (H3K4) (By similarity). Specifically deubiquitinates MYC in the nucleolus, leading to prevent MYC degradation by the proteasome: acts by specifically interacting with isoform 3 of FBXW7 (FBW7gamma) in the nucleolus and counteracting ubiquitination of MYC by the SCF(FBW7) complex (By similarity). In contrast, it does not interact with isoform 1 of FBXW7 (FBW7alpha) in the nucleoplasm (By similarity). Interacts to and regulates the actions of E3 ubiquitin-protein ligase NEDD4L over substrates such as NTRK1, KCNQ2 and KCNQ3, affecting their expression an functions (By similarity). Deubiquitinates SOD2, regulates SOD2 protein stability (By similarity). Deubiquitinase activity is required to control selective autophagy activation by ubiquitinated proteins (By similarity). Promotes CEP63 stabilization through 'Lys-48'-linked deubiquitination leading to increased stability (By similarity). Acts as a SUMO ligase to promote EXOSC10 sumoylation critical for the nucleolar RNA exosome function in rRNA processing (By similarity). Binds to pre-rRNAs (By similarity).</text>
</comment>
<comment type="catalytic activity">
    <reaction evidence="1">
        <text>Thiol-dependent hydrolysis of ester, thioester, amide, peptide and isopeptide bonds formed by the C-terminal Gly of ubiquitin (a 76-residue protein attached to proteins as an intracellular targeting signal).</text>
        <dbReference type="EC" id="3.4.19.12"/>
    </reaction>
</comment>
<comment type="subunit">
    <text evidence="1">Interacts with isoform 3 of FBXW7; the interaction inhibits MYC degradation induced by SCF(FBW7) complex. Interacts with NTRK1; USP36 does not deubiquitinate NTRK1. Interacts with NEDD4L (via domains WW1, 3 and 4); the interaction inhibits ubiquitination of, at least, NTRK1, KCNQ2 and KCNQ3 by NEDD4L. Interacts (via C-terminus) with EXOSC10 (via C-terminus); the interaction is facilitated by the association with RNA and promotes sumoylation of EXOSC10 (By similarity).</text>
</comment>
<comment type="subcellular location">
    <subcellularLocation>
        <location evidence="1">Nucleus</location>
        <location evidence="1">Nucleolus</location>
    </subcellularLocation>
    <subcellularLocation>
        <location evidence="1">Cytoplasm</location>
    </subcellularLocation>
</comment>
<comment type="PTM">
    <text evidence="1">Polyubiquitinated by NEDD4L, no effect on USP36 protein levels. Both proteins interact with and regulate each other's ubiquitination levels.</text>
</comment>
<comment type="disruption phenotype">
    <text evidence="5">Embryonic lethality (PubMed:29273634). Embryos show apoptosis at the morula stage, blocking the transition from morula to blastocysts during embryonic development (PubMed:29273634).</text>
</comment>
<comment type="similarity">
    <text evidence="6">Belongs to the peptidase C19 family.</text>
</comment>
<comment type="sequence caution" evidence="6">
    <conflict type="erroneous initiation">
        <sequence resource="EMBL-CDS" id="BAC98173"/>
    </conflict>
    <text>Extended N-terminus.</text>
</comment>
<feature type="chain" id="PRO_0000378494" description="Ubiquitin carboxyl-terminal hydrolase 36">
    <location>
        <begin position="1"/>
        <end position="1098"/>
    </location>
</feature>
<feature type="domain" description="USP">
    <location>
        <begin position="122"/>
        <end position="423"/>
    </location>
</feature>
<feature type="region of interest" description="Disordered" evidence="4">
    <location>
        <begin position="72"/>
        <end position="97"/>
    </location>
</feature>
<feature type="region of interest" description="Disordered" evidence="4">
    <location>
        <begin position="428"/>
        <end position="464"/>
    </location>
</feature>
<feature type="region of interest" description="Disordered" evidence="4">
    <location>
        <begin position="483"/>
        <end position="574"/>
    </location>
</feature>
<feature type="region of interest" description="Disordered" evidence="4">
    <location>
        <begin position="589"/>
        <end position="640"/>
    </location>
</feature>
<feature type="region of interest" description="Disordered" evidence="4">
    <location>
        <begin position="664"/>
        <end position="710"/>
    </location>
</feature>
<feature type="region of interest" description="Disordered" evidence="4">
    <location>
        <begin position="722"/>
        <end position="973"/>
    </location>
</feature>
<feature type="compositionally biased region" description="Basic and acidic residues" evidence="4">
    <location>
        <begin position="72"/>
        <end position="86"/>
    </location>
</feature>
<feature type="compositionally biased region" description="Low complexity" evidence="4">
    <location>
        <begin position="540"/>
        <end position="558"/>
    </location>
</feature>
<feature type="compositionally biased region" description="Low complexity" evidence="4">
    <location>
        <begin position="606"/>
        <end position="617"/>
    </location>
</feature>
<feature type="compositionally biased region" description="Polar residues" evidence="4">
    <location>
        <begin position="665"/>
        <end position="677"/>
    </location>
</feature>
<feature type="compositionally biased region" description="Low complexity" evidence="4">
    <location>
        <begin position="683"/>
        <end position="692"/>
    </location>
</feature>
<feature type="compositionally biased region" description="Low complexity" evidence="4">
    <location>
        <begin position="746"/>
        <end position="763"/>
    </location>
</feature>
<feature type="compositionally biased region" description="Polar residues" evidence="4">
    <location>
        <begin position="853"/>
        <end position="878"/>
    </location>
</feature>
<feature type="compositionally biased region" description="Basic residues" evidence="4">
    <location>
        <begin position="889"/>
        <end position="898"/>
    </location>
</feature>
<feature type="compositionally biased region" description="Polar residues" evidence="4">
    <location>
        <begin position="901"/>
        <end position="917"/>
    </location>
</feature>
<feature type="compositionally biased region" description="Basic and acidic residues" evidence="4">
    <location>
        <begin position="921"/>
        <end position="932"/>
    </location>
</feature>
<feature type="compositionally biased region" description="Basic residues" evidence="4">
    <location>
        <begin position="933"/>
        <end position="943"/>
    </location>
</feature>
<feature type="compositionally biased region" description="Basic and acidic residues" evidence="4">
    <location>
        <begin position="944"/>
        <end position="960"/>
    </location>
</feature>
<feature type="active site" description="Nucleophile" evidence="2 3">
    <location>
        <position position="131"/>
    </location>
</feature>
<feature type="active site" description="Proton acceptor" evidence="2 3">
    <location>
        <position position="382"/>
    </location>
</feature>
<feature type="modified residue" description="Phosphoserine" evidence="1">
    <location>
        <position position="429"/>
    </location>
</feature>
<feature type="modified residue" description="Phosphoserine" evidence="1">
    <location>
        <position position="463"/>
    </location>
</feature>
<feature type="modified residue" description="Phosphoserine" evidence="1">
    <location>
        <position position="547"/>
    </location>
</feature>
<feature type="modified residue" description="Phosphoserine" evidence="1">
    <location>
        <position position="578"/>
    </location>
</feature>
<feature type="modified residue" description="Phosphoserine" evidence="1">
    <location>
        <position position="663"/>
    </location>
</feature>
<feature type="modified residue" description="Phosphoserine" evidence="1">
    <location>
        <position position="678"/>
    </location>
</feature>
<feature type="modified residue" description="Phosphoserine" evidence="1">
    <location>
        <position position="709"/>
    </location>
</feature>
<feature type="sequence conflict" description="In Ref. 2; BAC98173." evidence="6" ref="2">
    <original>S</original>
    <variation>P</variation>
    <location>
        <position position="452"/>
    </location>
</feature>
<feature type="sequence conflict" description="In Ref. 2; BAC98173." evidence="6" ref="2">
    <original>V</original>
    <variation>I</variation>
    <location>
        <position position="486"/>
    </location>
</feature>
<feature type="sequence conflict" description="In Ref. 2; BAC98173." evidence="6" ref="2">
    <original>L</original>
    <variation>P</variation>
    <location>
        <position position="541"/>
    </location>
</feature>
<evidence type="ECO:0000250" key="1">
    <source>
        <dbReference type="UniProtKB" id="Q9P275"/>
    </source>
</evidence>
<evidence type="ECO:0000255" key="2">
    <source>
        <dbReference type="PROSITE-ProRule" id="PRU10092"/>
    </source>
</evidence>
<evidence type="ECO:0000255" key="3">
    <source>
        <dbReference type="PROSITE-ProRule" id="PRU10093"/>
    </source>
</evidence>
<evidence type="ECO:0000256" key="4">
    <source>
        <dbReference type="SAM" id="MobiDB-lite"/>
    </source>
</evidence>
<evidence type="ECO:0000269" key="5">
    <source>
    </source>
</evidence>
<evidence type="ECO:0000305" key="6"/>